<organism>
    <name type="scientific">Photorhabdus laumondii subsp. laumondii (strain DSM 15139 / CIP 105565 / TT01)</name>
    <name type="common">Photorhabdus luminescens subsp. laumondii</name>
    <dbReference type="NCBI Taxonomy" id="243265"/>
    <lineage>
        <taxon>Bacteria</taxon>
        <taxon>Pseudomonadati</taxon>
        <taxon>Pseudomonadota</taxon>
        <taxon>Gammaproteobacteria</taxon>
        <taxon>Enterobacterales</taxon>
        <taxon>Morganellaceae</taxon>
        <taxon>Photorhabdus</taxon>
    </lineage>
</organism>
<dbReference type="EC" id="3.5.99.6" evidence="1"/>
<dbReference type="EMBL" id="BX571863">
    <property type="protein sequence ID" value="CAE13610.1"/>
    <property type="molecule type" value="Genomic_DNA"/>
</dbReference>
<dbReference type="RefSeq" id="WP_011145640.1">
    <property type="nucleotide sequence ID" value="NC_005126.1"/>
</dbReference>
<dbReference type="SMR" id="Q7MB61"/>
<dbReference type="STRING" id="243265.plu1317"/>
<dbReference type="GeneID" id="48847600"/>
<dbReference type="KEGG" id="plu:plu1317"/>
<dbReference type="eggNOG" id="COG0363">
    <property type="taxonomic scope" value="Bacteria"/>
</dbReference>
<dbReference type="HOGENOM" id="CLU_049611_0_1_6"/>
<dbReference type="OrthoDB" id="9791139at2"/>
<dbReference type="UniPathway" id="UPA00629">
    <property type="reaction ID" value="UER00684"/>
</dbReference>
<dbReference type="Proteomes" id="UP000002514">
    <property type="component" value="Chromosome"/>
</dbReference>
<dbReference type="GO" id="GO:0005737">
    <property type="term" value="C:cytoplasm"/>
    <property type="evidence" value="ECO:0007669"/>
    <property type="project" value="TreeGrafter"/>
</dbReference>
<dbReference type="GO" id="GO:0004342">
    <property type="term" value="F:glucosamine-6-phosphate deaminase activity"/>
    <property type="evidence" value="ECO:0007669"/>
    <property type="project" value="UniProtKB-UniRule"/>
</dbReference>
<dbReference type="GO" id="GO:0042802">
    <property type="term" value="F:identical protein binding"/>
    <property type="evidence" value="ECO:0007669"/>
    <property type="project" value="TreeGrafter"/>
</dbReference>
<dbReference type="GO" id="GO:0005975">
    <property type="term" value="P:carbohydrate metabolic process"/>
    <property type="evidence" value="ECO:0007669"/>
    <property type="project" value="InterPro"/>
</dbReference>
<dbReference type="GO" id="GO:0006043">
    <property type="term" value="P:glucosamine catabolic process"/>
    <property type="evidence" value="ECO:0007669"/>
    <property type="project" value="TreeGrafter"/>
</dbReference>
<dbReference type="GO" id="GO:0006046">
    <property type="term" value="P:N-acetylglucosamine catabolic process"/>
    <property type="evidence" value="ECO:0007669"/>
    <property type="project" value="TreeGrafter"/>
</dbReference>
<dbReference type="GO" id="GO:0019262">
    <property type="term" value="P:N-acetylneuraminate catabolic process"/>
    <property type="evidence" value="ECO:0007669"/>
    <property type="project" value="UniProtKB-UniRule"/>
</dbReference>
<dbReference type="CDD" id="cd01399">
    <property type="entry name" value="GlcN6P_deaminase"/>
    <property type="match status" value="1"/>
</dbReference>
<dbReference type="FunFam" id="3.40.50.1360:FF:000002">
    <property type="entry name" value="Glucosamine-6-phosphate deaminase"/>
    <property type="match status" value="1"/>
</dbReference>
<dbReference type="Gene3D" id="3.40.50.1360">
    <property type="match status" value="1"/>
</dbReference>
<dbReference type="HAMAP" id="MF_01241">
    <property type="entry name" value="GlcN6P_deamin"/>
    <property type="match status" value="1"/>
</dbReference>
<dbReference type="InterPro" id="IPR006148">
    <property type="entry name" value="Glc/Gal-6P_isomerase"/>
</dbReference>
<dbReference type="InterPro" id="IPR004547">
    <property type="entry name" value="Glucosamine6P_isomerase"/>
</dbReference>
<dbReference type="InterPro" id="IPR018321">
    <property type="entry name" value="Glucosamine6P_isomerase_CS"/>
</dbReference>
<dbReference type="InterPro" id="IPR037171">
    <property type="entry name" value="NagB/RpiA_transferase-like"/>
</dbReference>
<dbReference type="NCBIfam" id="TIGR00502">
    <property type="entry name" value="nagB"/>
    <property type="match status" value="1"/>
</dbReference>
<dbReference type="PANTHER" id="PTHR11280">
    <property type="entry name" value="GLUCOSAMINE-6-PHOSPHATE ISOMERASE"/>
    <property type="match status" value="1"/>
</dbReference>
<dbReference type="PANTHER" id="PTHR11280:SF5">
    <property type="entry name" value="GLUCOSAMINE-6-PHOSPHATE ISOMERASE"/>
    <property type="match status" value="1"/>
</dbReference>
<dbReference type="Pfam" id="PF01182">
    <property type="entry name" value="Glucosamine_iso"/>
    <property type="match status" value="1"/>
</dbReference>
<dbReference type="SUPFAM" id="SSF100950">
    <property type="entry name" value="NagB/RpiA/CoA transferase-like"/>
    <property type="match status" value="1"/>
</dbReference>
<dbReference type="PROSITE" id="PS01161">
    <property type="entry name" value="GLC_GALNAC_ISOMERASE"/>
    <property type="match status" value="1"/>
</dbReference>
<gene>
    <name evidence="1" type="primary">nagB</name>
    <name type="ordered locus">plu1317</name>
</gene>
<evidence type="ECO:0000255" key="1">
    <source>
        <dbReference type="HAMAP-Rule" id="MF_01241"/>
    </source>
</evidence>
<feature type="chain" id="PRO_1000067008" description="Glucosamine-6-phosphate deaminase">
    <location>
        <begin position="1"/>
        <end position="270"/>
    </location>
</feature>
<feature type="active site" description="Proton acceptor; for enolization step" evidence="1">
    <location>
        <position position="72"/>
    </location>
</feature>
<feature type="active site" description="For ring-opening step" evidence="1">
    <location>
        <position position="141"/>
    </location>
</feature>
<feature type="active site" description="Proton acceptor; for ring-opening step" evidence="1">
    <location>
        <position position="143"/>
    </location>
</feature>
<feature type="active site" description="For ring-opening step" evidence="1">
    <location>
        <position position="148"/>
    </location>
</feature>
<feature type="site" description="Part of the allosteric site" evidence="1">
    <location>
        <position position="151"/>
    </location>
</feature>
<feature type="site" description="Part of the allosteric site" evidence="1">
    <location>
        <position position="158"/>
    </location>
</feature>
<feature type="site" description="Part of the allosteric site" evidence="1">
    <location>
        <position position="160"/>
    </location>
</feature>
<feature type="site" description="Part of the allosteric site" evidence="1">
    <location>
        <position position="161"/>
    </location>
</feature>
<feature type="site" description="Part of the allosteric site" evidence="1">
    <location>
        <position position="254"/>
    </location>
</feature>
<protein>
    <recommendedName>
        <fullName evidence="1">Glucosamine-6-phosphate deaminase</fullName>
        <ecNumber evidence="1">3.5.99.6</ecNumber>
    </recommendedName>
    <alternativeName>
        <fullName evidence="1">GlcN6P deaminase</fullName>
        <shortName evidence="1">GNPDA</shortName>
    </alternativeName>
    <alternativeName>
        <fullName evidence="1">Glucosamine-6-phosphate isomerase</fullName>
    </alternativeName>
</protein>
<accession>Q7MB61</accession>
<comment type="function">
    <text evidence="1">Catalyzes the reversible isomerization-deamination of glucosamine 6-phosphate (GlcN6P) to form fructose 6-phosphate (Fru6P) and ammonium ion.</text>
</comment>
<comment type="catalytic activity">
    <reaction evidence="1">
        <text>alpha-D-glucosamine 6-phosphate + H2O = beta-D-fructose 6-phosphate + NH4(+)</text>
        <dbReference type="Rhea" id="RHEA:12172"/>
        <dbReference type="ChEBI" id="CHEBI:15377"/>
        <dbReference type="ChEBI" id="CHEBI:28938"/>
        <dbReference type="ChEBI" id="CHEBI:57634"/>
        <dbReference type="ChEBI" id="CHEBI:75989"/>
        <dbReference type="EC" id="3.5.99.6"/>
    </reaction>
</comment>
<comment type="activity regulation">
    <text evidence="1">Allosterically activated by N-acetylglucosamine 6-phosphate (GlcNAc6P).</text>
</comment>
<comment type="pathway">
    <text evidence="1">Amino-sugar metabolism; N-acetylneuraminate degradation; D-fructose 6-phosphate from N-acetylneuraminate: step 5/5.</text>
</comment>
<comment type="subunit">
    <text evidence="1">Homohexamer.</text>
</comment>
<comment type="similarity">
    <text evidence="1">Belongs to the glucosamine/galactosamine-6-phosphate isomerase family. NagB subfamily.</text>
</comment>
<sequence>MRLIPLANASDVGKWSAHYIVSKINAFNPTAEHPFILGLPTGSTPLATYKELIALHKAGKVSFKYVVTFNMDEYVGITENHPQSYHHFMHQNFLDHIDIPKENINLLNGNASDVETECQRYEDKIKSYGQIHLFMGGVGNDGHIAFNEPASSLTSRTRIKTLTVETRTANSRFFDNDINQVPKYALTVGVGTLMDAEEIMILATGLNKAQAIQAAIEGNVNHMWTISCLQMHPKSIIVCDEPATMELKVKTVKYFHQLEADIIGEFASKK</sequence>
<proteinExistence type="inferred from homology"/>
<name>NAGB_PHOLL</name>
<keyword id="KW-0021">Allosteric enzyme</keyword>
<keyword id="KW-0119">Carbohydrate metabolism</keyword>
<keyword id="KW-0378">Hydrolase</keyword>
<keyword id="KW-1185">Reference proteome</keyword>
<reference key="1">
    <citation type="journal article" date="2003" name="Nat. Biotechnol.">
        <title>The genome sequence of the entomopathogenic bacterium Photorhabdus luminescens.</title>
        <authorList>
            <person name="Duchaud E."/>
            <person name="Rusniok C."/>
            <person name="Frangeul L."/>
            <person name="Buchrieser C."/>
            <person name="Givaudan A."/>
            <person name="Taourit S."/>
            <person name="Bocs S."/>
            <person name="Boursaux-Eude C."/>
            <person name="Chandler M."/>
            <person name="Charles J.-F."/>
            <person name="Dassa E."/>
            <person name="Derose R."/>
            <person name="Derzelle S."/>
            <person name="Freyssinet G."/>
            <person name="Gaudriault S."/>
            <person name="Medigue C."/>
            <person name="Lanois A."/>
            <person name="Powell K."/>
            <person name="Siguier P."/>
            <person name="Vincent R."/>
            <person name="Wingate V."/>
            <person name="Zouine M."/>
            <person name="Glaser P."/>
            <person name="Boemare N."/>
            <person name="Danchin A."/>
            <person name="Kunst F."/>
        </authorList>
    </citation>
    <scope>NUCLEOTIDE SEQUENCE [LARGE SCALE GENOMIC DNA]</scope>
    <source>
        <strain>DSM 15139 / CIP 105565 / TT01</strain>
    </source>
</reference>